<sequence length="236" mass="25746">MAATLLDVCAVVPAAGFGRRMQTECPKQYLSIGNKTILEHSVHALLAHPRVTRVVIAISLGDHRFAQLPLANHPQITVVDGGNERADSVLAGLQAVAKAQWVLVHDAARPCLHQDDLARLLAISENSRVGGILASPVRDTMKRGEPGKNAIAHTVERADLWHALTPQFFPRELLHDCLTRALNEGATITDEASALEYCGFHPALVEGRADNIKVTRPEDLALAEFYLTRTIHQEKA</sequence>
<comment type="function">
    <text evidence="1">Catalyzes the formation of 4-diphosphocytidyl-2-C-methyl-D-erythritol from CTP and 2-C-methyl-D-erythritol 4-phosphate (MEP).</text>
</comment>
<comment type="catalytic activity">
    <reaction evidence="1">
        <text>2-C-methyl-D-erythritol 4-phosphate + CTP + H(+) = 4-CDP-2-C-methyl-D-erythritol + diphosphate</text>
        <dbReference type="Rhea" id="RHEA:13429"/>
        <dbReference type="ChEBI" id="CHEBI:15378"/>
        <dbReference type="ChEBI" id="CHEBI:33019"/>
        <dbReference type="ChEBI" id="CHEBI:37563"/>
        <dbReference type="ChEBI" id="CHEBI:57823"/>
        <dbReference type="ChEBI" id="CHEBI:58262"/>
        <dbReference type="EC" id="2.7.7.60"/>
    </reaction>
</comment>
<comment type="pathway">
    <text evidence="1">Isoprenoid biosynthesis; isopentenyl diphosphate biosynthesis via DXP pathway; isopentenyl diphosphate from 1-deoxy-D-xylulose 5-phosphate: step 2/6.</text>
</comment>
<comment type="subunit">
    <text evidence="1">Homodimer.</text>
</comment>
<comment type="similarity">
    <text evidence="1">Belongs to the IspD/TarI cytidylyltransferase family. IspD subfamily.</text>
</comment>
<organism>
    <name type="scientific">Salmonella agona (strain SL483)</name>
    <dbReference type="NCBI Taxonomy" id="454166"/>
    <lineage>
        <taxon>Bacteria</taxon>
        <taxon>Pseudomonadati</taxon>
        <taxon>Pseudomonadota</taxon>
        <taxon>Gammaproteobacteria</taxon>
        <taxon>Enterobacterales</taxon>
        <taxon>Enterobacteriaceae</taxon>
        <taxon>Salmonella</taxon>
    </lineage>
</organism>
<accession>B5F411</accession>
<reference key="1">
    <citation type="journal article" date="2011" name="J. Bacteriol.">
        <title>Comparative genomics of 28 Salmonella enterica isolates: evidence for CRISPR-mediated adaptive sublineage evolution.</title>
        <authorList>
            <person name="Fricke W.F."/>
            <person name="Mammel M.K."/>
            <person name="McDermott P.F."/>
            <person name="Tartera C."/>
            <person name="White D.G."/>
            <person name="Leclerc J.E."/>
            <person name="Ravel J."/>
            <person name="Cebula T.A."/>
        </authorList>
    </citation>
    <scope>NUCLEOTIDE SEQUENCE [LARGE SCALE GENOMIC DNA]</scope>
    <source>
        <strain>SL483</strain>
    </source>
</reference>
<name>ISPD_SALA4</name>
<dbReference type="EC" id="2.7.7.60" evidence="1"/>
<dbReference type="EMBL" id="CP001138">
    <property type="protein sequence ID" value="ACH52638.1"/>
    <property type="molecule type" value="Genomic_DNA"/>
</dbReference>
<dbReference type="RefSeq" id="WP_000741640.1">
    <property type="nucleotide sequence ID" value="NC_011149.1"/>
</dbReference>
<dbReference type="SMR" id="B5F411"/>
<dbReference type="KEGG" id="sea:SeAg_B3055"/>
<dbReference type="HOGENOM" id="CLU_061281_3_1_6"/>
<dbReference type="UniPathway" id="UPA00056">
    <property type="reaction ID" value="UER00093"/>
</dbReference>
<dbReference type="Proteomes" id="UP000008819">
    <property type="component" value="Chromosome"/>
</dbReference>
<dbReference type="GO" id="GO:0050518">
    <property type="term" value="F:2-C-methyl-D-erythritol 4-phosphate cytidylyltransferase activity"/>
    <property type="evidence" value="ECO:0007669"/>
    <property type="project" value="UniProtKB-UniRule"/>
</dbReference>
<dbReference type="GO" id="GO:0019288">
    <property type="term" value="P:isopentenyl diphosphate biosynthetic process, methylerythritol 4-phosphate pathway"/>
    <property type="evidence" value="ECO:0007669"/>
    <property type="project" value="UniProtKB-UniRule"/>
</dbReference>
<dbReference type="CDD" id="cd02516">
    <property type="entry name" value="CDP-ME_synthetase"/>
    <property type="match status" value="1"/>
</dbReference>
<dbReference type="FunFam" id="3.90.550.10:FF:000003">
    <property type="entry name" value="2-C-methyl-D-erythritol 4-phosphate cytidylyltransferase"/>
    <property type="match status" value="1"/>
</dbReference>
<dbReference type="Gene3D" id="3.90.550.10">
    <property type="entry name" value="Spore Coat Polysaccharide Biosynthesis Protein SpsA, Chain A"/>
    <property type="match status" value="1"/>
</dbReference>
<dbReference type="HAMAP" id="MF_00108">
    <property type="entry name" value="IspD"/>
    <property type="match status" value="1"/>
</dbReference>
<dbReference type="InterPro" id="IPR001228">
    <property type="entry name" value="IspD"/>
</dbReference>
<dbReference type="InterPro" id="IPR034683">
    <property type="entry name" value="IspD/TarI"/>
</dbReference>
<dbReference type="InterPro" id="IPR050088">
    <property type="entry name" value="IspD/TarI_cytidylyltransf_bact"/>
</dbReference>
<dbReference type="InterPro" id="IPR018294">
    <property type="entry name" value="ISPD_synthase_CS"/>
</dbReference>
<dbReference type="InterPro" id="IPR029044">
    <property type="entry name" value="Nucleotide-diphossugar_trans"/>
</dbReference>
<dbReference type="NCBIfam" id="TIGR00453">
    <property type="entry name" value="ispD"/>
    <property type="match status" value="1"/>
</dbReference>
<dbReference type="PANTHER" id="PTHR32125">
    <property type="entry name" value="2-C-METHYL-D-ERYTHRITOL 4-PHOSPHATE CYTIDYLYLTRANSFERASE, CHLOROPLASTIC"/>
    <property type="match status" value="1"/>
</dbReference>
<dbReference type="PANTHER" id="PTHR32125:SF4">
    <property type="entry name" value="2-C-METHYL-D-ERYTHRITOL 4-PHOSPHATE CYTIDYLYLTRANSFERASE, CHLOROPLASTIC"/>
    <property type="match status" value="1"/>
</dbReference>
<dbReference type="Pfam" id="PF01128">
    <property type="entry name" value="IspD"/>
    <property type="match status" value="1"/>
</dbReference>
<dbReference type="SUPFAM" id="SSF53448">
    <property type="entry name" value="Nucleotide-diphospho-sugar transferases"/>
    <property type="match status" value="1"/>
</dbReference>
<dbReference type="PROSITE" id="PS01295">
    <property type="entry name" value="ISPD"/>
    <property type="match status" value="1"/>
</dbReference>
<gene>
    <name evidence="1" type="primary">ispD</name>
    <name type="ordered locus">SeAg_B3055</name>
</gene>
<evidence type="ECO:0000255" key="1">
    <source>
        <dbReference type="HAMAP-Rule" id="MF_00108"/>
    </source>
</evidence>
<proteinExistence type="inferred from homology"/>
<feature type="chain" id="PRO_1000094342" description="2-C-methyl-D-erythritol 4-phosphate cytidylyltransferase">
    <location>
        <begin position="1"/>
        <end position="236"/>
    </location>
</feature>
<feature type="site" description="Transition state stabilizer" evidence="1">
    <location>
        <position position="20"/>
    </location>
</feature>
<feature type="site" description="Transition state stabilizer" evidence="1">
    <location>
        <position position="27"/>
    </location>
</feature>
<feature type="site" description="Positions MEP for the nucleophilic attack" evidence="1">
    <location>
        <position position="157"/>
    </location>
</feature>
<feature type="site" description="Positions MEP for the nucleophilic attack" evidence="1">
    <location>
        <position position="213"/>
    </location>
</feature>
<keyword id="KW-0414">Isoprene biosynthesis</keyword>
<keyword id="KW-0548">Nucleotidyltransferase</keyword>
<keyword id="KW-0808">Transferase</keyword>
<protein>
    <recommendedName>
        <fullName evidence="1">2-C-methyl-D-erythritol 4-phosphate cytidylyltransferase</fullName>
        <ecNumber evidence="1">2.7.7.60</ecNumber>
    </recommendedName>
    <alternativeName>
        <fullName evidence="1">4-diphosphocytidyl-2C-methyl-D-erythritol synthase</fullName>
    </alternativeName>
    <alternativeName>
        <fullName evidence="1">MEP cytidylyltransferase</fullName>
        <shortName evidence="1">MCT</shortName>
    </alternativeName>
</protein>